<comment type="function">
    <text>The production of the second messenger molecules diacylglycerol (DAG) and inositol 1,4,5-trisphosphate (IP3) is mediated by activated phosphatidylinositol-specific phospholipase C enzymes.</text>
</comment>
<comment type="catalytic activity">
    <reaction>
        <text>a 1,2-diacyl-sn-glycero-3-phospho-(1D-myo-inositol-4,5-bisphosphate) + H2O = 1D-myo-inositol 1,4,5-trisphosphate + a 1,2-diacyl-sn-glycerol + H(+)</text>
        <dbReference type="Rhea" id="RHEA:33179"/>
        <dbReference type="ChEBI" id="CHEBI:15377"/>
        <dbReference type="ChEBI" id="CHEBI:15378"/>
        <dbReference type="ChEBI" id="CHEBI:17815"/>
        <dbReference type="ChEBI" id="CHEBI:58456"/>
        <dbReference type="ChEBI" id="CHEBI:203600"/>
        <dbReference type="EC" id="3.1.4.11"/>
    </reaction>
</comment>
<comment type="alternative products">
    <event type="alternative splicing"/>
    <isoform>
        <id>P25455-3</id>
        <name>D</name>
        <sequence type="displayed"/>
    </isoform>
    <isoform>
        <id>P25455-2</id>
        <name>1</name>
        <name>Class-I</name>
        <sequence type="described" ref="VSP_021970 VSP_004727"/>
    </isoform>
    <isoform>
        <id>P25455-1</id>
        <name>A</name>
        <name>B</name>
        <name>Class-II</name>
        <sequence type="described" ref="VSP_021970"/>
    </isoform>
    <isoform>
        <id>P25455-4</id>
        <name>C</name>
        <sequence type="described" ref="VSP_004727"/>
    </isoform>
    <isoform>
        <id>P25455-5</id>
        <name>H</name>
        <sequence type="described" ref="VSP_053950 VSP_004727"/>
    </isoform>
    <isoform>
        <id>P25455-6</id>
        <name>G</name>
        <sequence type="described" ref="VSP_053949 VSP_004727"/>
    </isoform>
</comment>
<comment type="tissue specificity">
    <text evidence="6">Expressed in neuronal cell bodies of the optic lobe, central brain, and thoracic ganglia in adults, and the brain of larvae.</text>
</comment>
<dbReference type="EC" id="3.1.4.11"/>
<dbReference type="EMBL" id="M60452">
    <property type="protein sequence ID" value="AAA28819.1"/>
    <property type="molecule type" value="mRNA"/>
</dbReference>
<dbReference type="EMBL" id="M60453">
    <property type="protein sequence ID" value="AAA28820.1"/>
    <property type="molecule type" value="mRNA"/>
</dbReference>
<dbReference type="EMBL" id="AE014134">
    <property type="protein sequence ID" value="AAN10493.1"/>
    <property type="molecule type" value="Genomic_DNA"/>
</dbReference>
<dbReference type="EMBL" id="AE014134">
    <property type="protein sequence ID" value="AAS64631.1"/>
    <property type="molecule type" value="Genomic_DNA"/>
</dbReference>
<dbReference type="EMBL" id="AE014134">
    <property type="protein sequence ID" value="AAS64632.2"/>
    <property type="molecule type" value="Genomic_DNA"/>
</dbReference>
<dbReference type="EMBL" id="AE014134">
    <property type="protein sequence ID" value="AAS64633.1"/>
    <property type="molecule type" value="Genomic_DNA"/>
</dbReference>
<dbReference type="EMBL" id="AE014134">
    <property type="protein sequence ID" value="AGB92355.1"/>
    <property type="molecule type" value="Genomic_DNA"/>
</dbReference>
<dbReference type="EMBL" id="AY051657">
    <property type="protein sequence ID" value="AAK93081.1"/>
    <property type="molecule type" value="mRNA"/>
</dbReference>
<dbReference type="PIR" id="A40879">
    <property type="entry name" value="A40879"/>
</dbReference>
<dbReference type="PIR" id="B40879">
    <property type="entry name" value="B40879"/>
</dbReference>
<dbReference type="RefSeq" id="NP_001259818.1">
    <molecule id="P25455-6"/>
    <property type="nucleotide sequence ID" value="NM_001272889.1"/>
</dbReference>
<dbReference type="RefSeq" id="NP_476851.2">
    <molecule id="P25455-1"/>
    <property type="nucleotide sequence ID" value="NM_057503.5"/>
</dbReference>
<dbReference type="RefSeq" id="NP_476852.1">
    <molecule id="P25455-1"/>
    <property type="nucleotide sequence ID" value="NM_057504.5"/>
</dbReference>
<dbReference type="RefSeq" id="NP_995604.2">
    <molecule id="P25455-5"/>
    <property type="nucleotide sequence ID" value="NM_205882.2"/>
</dbReference>
<dbReference type="RefSeq" id="NP_995605.1">
    <molecule id="P25455-3"/>
    <property type="nucleotide sequence ID" value="NM_205883.2"/>
</dbReference>
<dbReference type="RefSeq" id="NP_995606.1">
    <molecule id="P25455-4"/>
    <property type="nucleotide sequence ID" value="NM_205884.3"/>
</dbReference>
<dbReference type="SMR" id="P25455"/>
<dbReference type="BioGRID" id="59460">
    <property type="interactions" value="4"/>
</dbReference>
<dbReference type="FunCoup" id="P25455">
    <property type="interactions" value="573"/>
</dbReference>
<dbReference type="IntAct" id="P25455">
    <property type="interactions" value="4"/>
</dbReference>
<dbReference type="STRING" id="7227.FBpp0089226"/>
<dbReference type="PaxDb" id="7227-FBpp0089226"/>
<dbReference type="DNASU" id="33204"/>
<dbReference type="EnsemblMetazoa" id="FBtr0078047">
    <molecule id="P25455-1"/>
    <property type="protein sequence ID" value="FBpp0077710"/>
    <property type="gene ID" value="FBgn0004611"/>
</dbReference>
<dbReference type="EnsemblMetazoa" id="FBtr0078048">
    <molecule id="P25455-1"/>
    <property type="protein sequence ID" value="FBpp0077711"/>
    <property type="gene ID" value="FBgn0004611"/>
</dbReference>
<dbReference type="EnsemblMetazoa" id="FBtr0078049">
    <molecule id="P25455-4"/>
    <property type="protein sequence ID" value="FBpp0089225"/>
    <property type="gene ID" value="FBgn0004611"/>
</dbReference>
<dbReference type="EnsemblMetazoa" id="FBtr0078050">
    <molecule id="P25455-3"/>
    <property type="protein sequence ID" value="FBpp0089226"/>
    <property type="gene ID" value="FBgn0004611"/>
</dbReference>
<dbReference type="EnsemblMetazoa" id="FBtr0330673">
    <molecule id="P25455-6"/>
    <property type="protein sequence ID" value="FBpp0303523"/>
    <property type="gene ID" value="FBgn0004611"/>
</dbReference>
<dbReference type="EnsemblMetazoa" id="FBtr0330674">
    <molecule id="P25455-5"/>
    <property type="protein sequence ID" value="FBpp0303524"/>
    <property type="gene ID" value="FBgn0004611"/>
</dbReference>
<dbReference type="GeneID" id="33204"/>
<dbReference type="KEGG" id="dme:Dmel_CG4574"/>
<dbReference type="AGR" id="FB:FBgn0004611"/>
<dbReference type="CTD" id="33204"/>
<dbReference type="FlyBase" id="FBgn0004611">
    <property type="gene designation" value="Plc21C"/>
</dbReference>
<dbReference type="VEuPathDB" id="VectorBase:FBgn0004611"/>
<dbReference type="eggNOG" id="KOG1265">
    <property type="taxonomic scope" value="Eukaryota"/>
</dbReference>
<dbReference type="GeneTree" id="ENSGT00940000173822"/>
<dbReference type="InParanoid" id="P25455"/>
<dbReference type="OMA" id="IWSEELF"/>
<dbReference type="OrthoDB" id="269822at2759"/>
<dbReference type="PhylomeDB" id="P25455"/>
<dbReference type="Reactome" id="R-DME-112043">
    <property type="pathway name" value="PLC beta mediated events"/>
</dbReference>
<dbReference type="Reactome" id="R-DME-1855204">
    <property type="pathway name" value="Synthesis of IP3 and IP4 in the cytosol"/>
</dbReference>
<dbReference type="Reactome" id="R-DME-399997">
    <property type="pathway name" value="Acetylcholine regulates insulin secretion"/>
</dbReference>
<dbReference type="Reactome" id="R-DME-4086398">
    <property type="pathway name" value="Ca2+ pathway"/>
</dbReference>
<dbReference type="Reactome" id="R-DME-416476">
    <property type="pathway name" value="G alpha (q) signalling events"/>
</dbReference>
<dbReference type="Reactome" id="R-DME-418217">
    <property type="pathway name" value="G beta:gamma signalling through PLC beta"/>
</dbReference>
<dbReference type="Reactome" id="R-DME-434316">
    <property type="pathway name" value="Fatty Acids bound to GPR40 (FFAR1) regulate insulin secretion"/>
</dbReference>
<dbReference type="Reactome" id="R-DME-500657">
    <property type="pathway name" value="Presynaptic function of Kainate receptors"/>
</dbReference>
<dbReference type="SignaLink" id="P25455"/>
<dbReference type="BioGRID-ORCS" id="33204">
    <property type="hits" value="0 hits in 3 CRISPR screens"/>
</dbReference>
<dbReference type="GenomeRNAi" id="33204"/>
<dbReference type="PRO" id="PR:P25455"/>
<dbReference type="Proteomes" id="UP000000803">
    <property type="component" value="Chromosome 2L"/>
</dbReference>
<dbReference type="Bgee" id="FBgn0004611">
    <property type="expression patterns" value="Expressed in visceral muscle cell in digestive tract and 270 other cell types or tissues"/>
</dbReference>
<dbReference type="GO" id="GO:0005737">
    <property type="term" value="C:cytoplasm"/>
    <property type="evidence" value="ECO:0000318"/>
    <property type="project" value="GO_Central"/>
</dbReference>
<dbReference type="GO" id="GO:0005509">
    <property type="term" value="F:calcium ion binding"/>
    <property type="evidence" value="ECO:0007669"/>
    <property type="project" value="InterPro"/>
</dbReference>
<dbReference type="GO" id="GO:0004435">
    <property type="term" value="F:phosphatidylinositol-4,5-bisphosphate phospholipase C activity"/>
    <property type="evidence" value="ECO:0000318"/>
    <property type="project" value="GO_Central"/>
</dbReference>
<dbReference type="GO" id="GO:0043153">
    <property type="term" value="P:entrainment of circadian clock by photoperiod"/>
    <property type="evidence" value="ECO:0000316"/>
    <property type="project" value="FlyBase"/>
</dbReference>
<dbReference type="GO" id="GO:0007629">
    <property type="term" value="P:flight behavior"/>
    <property type="evidence" value="ECO:0000316"/>
    <property type="project" value="FlyBase"/>
</dbReference>
<dbReference type="GO" id="GO:0007186">
    <property type="term" value="P:G protein-coupled receptor signaling pathway"/>
    <property type="evidence" value="ECO:0000318"/>
    <property type="project" value="GO_Central"/>
</dbReference>
<dbReference type="GO" id="GO:0016042">
    <property type="term" value="P:lipid catabolic process"/>
    <property type="evidence" value="ECO:0007669"/>
    <property type="project" value="UniProtKB-KW"/>
</dbReference>
<dbReference type="GO" id="GO:0070050">
    <property type="term" value="P:neuron cellular homeostasis"/>
    <property type="evidence" value="ECO:0000316"/>
    <property type="project" value="FlyBase"/>
</dbReference>
<dbReference type="GO" id="GO:0046488">
    <property type="term" value="P:phosphatidylinositol metabolic process"/>
    <property type="evidence" value="ECO:0000318"/>
    <property type="project" value="GO_Central"/>
</dbReference>
<dbReference type="GO" id="GO:0048015">
    <property type="term" value="P:phosphatidylinositol-mediated signaling"/>
    <property type="evidence" value="ECO:0000318"/>
    <property type="project" value="GO_Central"/>
</dbReference>
<dbReference type="GO" id="GO:0090263">
    <property type="term" value="P:positive regulation of canonical Wnt signaling pathway"/>
    <property type="evidence" value="ECO:0000315"/>
    <property type="project" value="FlyBase"/>
</dbReference>
<dbReference type="GO" id="GO:1900073">
    <property type="term" value="P:regulation of neuromuscular synaptic transmission"/>
    <property type="evidence" value="ECO:0000316"/>
    <property type="project" value="FlyBase"/>
</dbReference>
<dbReference type="GO" id="GO:0051209">
    <property type="term" value="P:release of sequestered calcium ion into cytosol"/>
    <property type="evidence" value="ECO:0000318"/>
    <property type="project" value="GO_Central"/>
</dbReference>
<dbReference type="CDD" id="cd00275">
    <property type="entry name" value="C2_PLC_like"/>
    <property type="match status" value="1"/>
</dbReference>
<dbReference type="CDD" id="cd16213">
    <property type="entry name" value="EFh_PI-PLC21"/>
    <property type="match status" value="1"/>
</dbReference>
<dbReference type="CDD" id="cd13361">
    <property type="entry name" value="PH_PLC_beta"/>
    <property type="match status" value="1"/>
</dbReference>
<dbReference type="CDD" id="cd08591">
    <property type="entry name" value="PI-PLCc_beta"/>
    <property type="match status" value="1"/>
</dbReference>
<dbReference type="FunFam" id="3.20.20.190:FF:000084">
    <property type="match status" value="1"/>
</dbReference>
<dbReference type="FunFam" id="1.10.238.10:FF:000024">
    <property type="entry name" value="1-phosphatidylinositol 4,5-bisphosphate phosphodiesterase"/>
    <property type="match status" value="1"/>
</dbReference>
<dbReference type="FunFam" id="1.20.1230.10:FF:000007">
    <property type="entry name" value="1-phosphatidylinositol 4,5-bisphosphate phosphodiesterase"/>
    <property type="match status" value="1"/>
</dbReference>
<dbReference type="FunFam" id="2.30.29.240:FF:000006">
    <property type="entry name" value="1-phosphatidylinositol 4,5-bisphosphate phosphodiesterase"/>
    <property type="match status" value="1"/>
</dbReference>
<dbReference type="FunFam" id="2.60.40.150:FF:000008">
    <property type="entry name" value="1-phosphatidylinositol 4,5-bisphosphate phosphodiesterase"/>
    <property type="match status" value="1"/>
</dbReference>
<dbReference type="Gene3D" id="2.30.29.240">
    <property type="match status" value="1"/>
</dbReference>
<dbReference type="Gene3D" id="2.60.40.150">
    <property type="entry name" value="C2 domain"/>
    <property type="match status" value="1"/>
</dbReference>
<dbReference type="Gene3D" id="1.10.238.10">
    <property type="entry name" value="EF-hand"/>
    <property type="match status" value="1"/>
</dbReference>
<dbReference type="Gene3D" id="3.20.20.190">
    <property type="entry name" value="Phosphatidylinositol (PI) phosphodiesterase"/>
    <property type="match status" value="1"/>
</dbReference>
<dbReference type="Gene3D" id="1.20.1230.10">
    <property type="entry name" value="Phospholipase C beta, distal C-terminal domain"/>
    <property type="match status" value="1"/>
</dbReference>
<dbReference type="InterPro" id="IPR000008">
    <property type="entry name" value="C2_dom"/>
</dbReference>
<dbReference type="InterPro" id="IPR035892">
    <property type="entry name" value="C2_domain_sf"/>
</dbReference>
<dbReference type="InterPro" id="IPR011992">
    <property type="entry name" value="EF-hand-dom_pair"/>
</dbReference>
<dbReference type="InterPro" id="IPR001192">
    <property type="entry name" value="PI-PLC_fam"/>
</dbReference>
<dbReference type="InterPro" id="IPR016280">
    <property type="entry name" value="PLC-beta"/>
</dbReference>
<dbReference type="InterPro" id="IPR042531">
    <property type="entry name" value="PLC-beta_C_sf"/>
</dbReference>
<dbReference type="InterPro" id="IPR037862">
    <property type="entry name" value="PLC-beta_PH"/>
</dbReference>
<dbReference type="InterPro" id="IPR017946">
    <property type="entry name" value="PLC-like_Pdiesterase_TIM-brl"/>
</dbReference>
<dbReference type="InterPro" id="IPR053945">
    <property type="entry name" value="PLCB1-4-like_EFh"/>
</dbReference>
<dbReference type="InterPro" id="IPR000909">
    <property type="entry name" value="PLipase_C_PInositol-sp_X_dom"/>
</dbReference>
<dbReference type="InterPro" id="IPR001711">
    <property type="entry name" value="PLipase_C_Pinositol-sp_Y"/>
</dbReference>
<dbReference type="PANTHER" id="PTHR10336:SF149">
    <property type="entry name" value="1-PHOSPHATIDYLINOSITOL 4,5-BISPHOSPHATE PHOSPHODIESTERASE CLASSES I AND II"/>
    <property type="match status" value="1"/>
</dbReference>
<dbReference type="PANTHER" id="PTHR10336">
    <property type="entry name" value="PHOSPHOINOSITIDE-SPECIFIC PHOSPHOLIPASE C FAMILY PROTEIN"/>
    <property type="match status" value="1"/>
</dbReference>
<dbReference type="Pfam" id="PF00168">
    <property type="entry name" value="C2"/>
    <property type="match status" value="1"/>
</dbReference>
<dbReference type="Pfam" id="PF17787">
    <property type="entry name" value="PH_14"/>
    <property type="match status" value="1"/>
</dbReference>
<dbReference type="Pfam" id="PF00388">
    <property type="entry name" value="PI-PLC-X"/>
    <property type="match status" value="1"/>
</dbReference>
<dbReference type="Pfam" id="PF00387">
    <property type="entry name" value="PI-PLC-Y"/>
    <property type="match status" value="1"/>
</dbReference>
<dbReference type="Pfam" id="PF22631">
    <property type="entry name" value="PLCB1-4-like_EFh"/>
    <property type="match status" value="1"/>
</dbReference>
<dbReference type="PIRSF" id="PIRSF000956">
    <property type="entry name" value="PLC-beta"/>
    <property type="match status" value="1"/>
</dbReference>
<dbReference type="PRINTS" id="PR00390">
    <property type="entry name" value="PHPHLIPASEC"/>
</dbReference>
<dbReference type="SMART" id="SM00239">
    <property type="entry name" value="C2"/>
    <property type="match status" value="1"/>
</dbReference>
<dbReference type="SMART" id="SM00148">
    <property type="entry name" value="PLCXc"/>
    <property type="match status" value="1"/>
</dbReference>
<dbReference type="SMART" id="SM00149">
    <property type="entry name" value="PLCYc"/>
    <property type="match status" value="1"/>
</dbReference>
<dbReference type="SUPFAM" id="SSF69989">
    <property type="entry name" value="C-terminal domain of PLC-beta"/>
    <property type="match status" value="1"/>
</dbReference>
<dbReference type="SUPFAM" id="SSF49562">
    <property type="entry name" value="C2 domain (Calcium/lipid-binding domain, CaLB)"/>
    <property type="match status" value="1"/>
</dbReference>
<dbReference type="SUPFAM" id="SSF47473">
    <property type="entry name" value="EF-hand"/>
    <property type="match status" value="1"/>
</dbReference>
<dbReference type="SUPFAM" id="SSF50729">
    <property type="entry name" value="PH domain-like"/>
    <property type="match status" value="1"/>
</dbReference>
<dbReference type="SUPFAM" id="SSF51695">
    <property type="entry name" value="PLC-like phosphodiesterases"/>
    <property type="match status" value="1"/>
</dbReference>
<dbReference type="PROSITE" id="PS50004">
    <property type="entry name" value="C2"/>
    <property type="match status" value="1"/>
</dbReference>
<dbReference type="PROSITE" id="PS50007">
    <property type="entry name" value="PIPLC_X_DOMAIN"/>
    <property type="match status" value="1"/>
</dbReference>
<dbReference type="PROSITE" id="PS50008">
    <property type="entry name" value="PIPLC_Y_DOMAIN"/>
    <property type="match status" value="1"/>
</dbReference>
<proteinExistence type="evidence at transcript level"/>
<evidence type="ECO:0000250" key="1"/>
<evidence type="ECO:0000255" key="2">
    <source>
        <dbReference type="PROSITE-ProRule" id="PRU00041"/>
    </source>
</evidence>
<evidence type="ECO:0000255" key="3">
    <source>
        <dbReference type="PROSITE-ProRule" id="PRU00270"/>
    </source>
</evidence>
<evidence type="ECO:0000255" key="4">
    <source>
        <dbReference type="PROSITE-ProRule" id="PRU00271"/>
    </source>
</evidence>
<evidence type="ECO:0000256" key="5">
    <source>
        <dbReference type="SAM" id="MobiDB-lite"/>
    </source>
</evidence>
<evidence type="ECO:0000269" key="6">
    <source>
    </source>
</evidence>
<evidence type="ECO:0000303" key="7">
    <source>
    </source>
</evidence>
<evidence type="ECO:0000303" key="8">
    <source>
    </source>
</evidence>
<evidence type="ECO:0000305" key="9"/>
<accession>P25455</accession>
<accession>A4UZX5</accession>
<accession>M9PC05</accession>
<accession>Q0E8V1</accession>
<accession>Q7KTZ7</accession>
<accession>Q961D5</accession>
<accession>Q9VPN9</accession>
<name>PIP1_DROME</name>
<feature type="chain" id="PRO_0000088511" description="1-phosphatidylinositol 4,5-bisphosphate phosphodiesterase classes I and II">
    <location>
        <begin position="1"/>
        <end position="1318"/>
    </location>
</feature>
<feature type="domain" description="PI-PLC X-box" evidence="3">
    <location>
        <begin position="318"/>
        <end position="466"/>
    </location>
</feature>
<feature type="domain" description="PI-PLC Y-box" evidence="4">
    <location>
        <begin position="599"/>
        <end position="715"/>
    </location>
</feature>
<feature type="domain" description="C2" evidence="2">
    <location>
        <begin position="715"/>
        <end position="843"/>
    </location>
</feature>
<feature type="region of interest" description="Disordered" evidence="5">
    <location>
        <begin position="466"/>
        <end position="489"/>
    </location>
</feature>
<feature type="region of interest" description="Disordered" evidence="5">
    <location>
        <begin position="505"/>
        <end position="594"/>
    </location>
</feature>
<feature type="region of interest" description="Disordered" evidence="5">
    <location>
        <begin position="1080"/>
        <end position="1112"/>
    </location>
</feature>
<feature type="region of interest" description="Disordered" evidence="5">
    <location>
        <begin position="1296"/>
        <end position="1318"/>
    </location>
</feature>
<feature type="compositionally biased region" description="Basic residues" evidence="5">
    <location>
        <begin position="466"/>
        <end position="481"/>
    </location>
</feature>
<feature type="compositionally biased region" description="Low complexity" evidence="5">
    <location>
        <begin position="528"/>
        <end position="543"/>
    </location>
</feature>
<feature type="compositionally biased region" description="Low complexity" evidence="5">
    <location>
        <begin position="554"/>
        <end position="563"/>
    </location>
</feature>
<feature type="compositionally biased region" description="Polar residues" evidence="5">
    <location>
        <begin position="571"/>
        <end position="580"/>
    </location>
</feature>
<feature type="compositionally biased region" description="Basic and acidic residues" evidence="5">
    <location>
        <begin position="585"/>
        <end position="594"/>
    </location>
</feature>
<feature type="compositionally biased region" description="Low complexity" evidence="5">
    <location>
        <begin position="1088"/>
        <end position="1107"/>
    </location>
</feature>
<feature type="active site" evidence="3">
    <location>
        <position position="333"/>
    </location>
</feature>
<feature type="active site" evidence="3">
    <location>
        <position position="378"/>
    </location>
</feature>
<feature type="binding site" evidence="1">
    <location>
        <position position="464"/>
    </location>
    <ligand>
        <name>substrate</name>
    </ligand>
</feature>
<feature type="binding site" evidence="1">
    <location>
        <position position="466"/>
    </location>
    <ligand>
        <name>substrate</name>
    </ligand>
</feature>
<feature type="binding site" evidence="1">
    <location>
        <position position="628"/>
    </location>
    <ligand>
        <name>substrate</name>
    </ligand>
</feature>
<feature type="binding site" evidence="1">
    <location>
        <position position="655"/>
    </location>
    <ligand>
        <name>substrate</name>
    </ligand>
</feature>
<feature type="splice variant" id="VSP_053949" description="In isoform G." evidence="9">
    <location>
        <begin position="300"/>
        <end position="360"/>
    </location>
</feature>
<feature type="splice variant" id="VSP_021970" description="In isoform 1 and isoform A." evidence="8">
    <original>FVFVQVG</original>
    <variation>C</variation>
    <location>
        <begin position="907"/>
        <end position="913"/>
    </location>
</feature>
<feature type="splice variant" id="VSP_053950" description="In isoform H." evidence="9">
    <original>FVFVQV</original>
    <variation>L</variation>
    <location>
        <begin position="907"/>
        <end position="912"/>
    </location>
</feature>
<feature type="splice variant" id="VSP_004727" description="In isoform 1, isoform C, isoform G and isoform H." evidence="7 8">
    <location>
        <begin position="1063"/>
        <end position="1069"/>
    </location>
</feature>
<feature type="sequence conflict" description="In Ref. 1; AAA28819/AAA28820." evidence="9" ref="1">
    <original>G</original>
    <variation>A</variation>
    <location>
        <position position="508"/>
    </location>
</feature>
<organism>
    <name type="scientific">Drosophila melanogaster</name>
    <name type="common">Fruit fly</name>
    <dbReference type="NCBI Taxonomy" id="7227"/>
    <lineage>
        <taxon>Eukaryota</taxon>
        <taxon>Metazoa</taxon>
        <taxon>Ecdysozoa</taxon>
        <taxon>Arthropoda</taxon>
        <taxon>Hexapoda</taxon>
        <taxon>Insecta</taxon>
        <taxon>Pterygota</taxon>
        <taxon>Neoptera</taxon>
        <taxon>Endopterygota</taxon>
        <taxon>Diptera</taxon>
        <taxon>Brachycera</taxon>
        <taxon>Muscomorpha</taxon>
        <taxon>Ephydroidea</taxon>
        <taxon>Drosophilidae</taxon>
        <taxon>Drosophila</taxon>
        <taxon>Sophophora</taxon>
    </lineage>
</organism>
<protein>
    <recommendedName>
        <fullName>1-phosphatidylinositol 4,5-bisphosphate phosphodiesterase classes I and II</fullName>
        <ecNumber>3.1.4.11</ecNumber>
    </recommendedName>
    <alternativeName>
        <fullName>Phosphoinositide phospholipase C</fullName>
    </alternativeName>
</protein>
<keyword id="KW-0025">Alternative splicing</keyword>
<keyword id="KW-0378">Hydrolase</keyword>
<keyword id="KW-0442">Lipid degradation</keyword>
<keyword id="KW-0443">Lipid metabolism</keyword>
<keyword id="KW-1185">Reference proteome</keyword>
<keyword id="KW-0807">Transducer</keyword>
<gene>
    <name type="primary">Plc21C</name>
    <name type="synonym">plc-21</name>
    <name type="ORF">CG4574</name>
</gene>
<reference key="1">
    <citation type="journal article" date="1991" name="J. Biol. Chem.">
        <title>A Drosophila phospholipase C gene that is expressed in the central nervous system.</title>
        <authorList>
            <person name="Shortridge R.D."/>
            <person name="Yoon J."/>
            <person name="Lending C.R."/>
            <person name="Bloomquist B.T."/>
            <person name="Perdew M.H."/>
            <person name="Pak W.L."/>
        </authorList>
    </citation>
    <scope>NUCLEOTIDE SEQUENCE [MRNA] (ISOFORMS 1 AND A)</scope>
    <scope>TISSUE SPECIFICITY</scope>
    <source>
        <tissue>Head</tissue>
    </source>
</reference>
<reference key="2">
    <citation type="journal article" date="2000" name="Science">
        <title>The genome sequence of Drosophila melanogaster.</title>
        <authorList>
            <person name="Adams M.D."/>
            <person name="Celniker S.E."/>
            <person name="Holt R.A."/>
            <person name="Evans C.A."/>
            <person name="Gocayne J.D."/>
            <person name="Amanatides P.G."/>
            <person name="Scherer S.E."/>
            <person name="Li P.W."/>
            <person name="Hoskins R.A."/>
            <person name="Galle R.F."/>
            <person name="George R.A."/>
            <person name="Lewis S.E."/>
            <person name="Richards S."/>
            <person name="Ashburner M."/>
            <person name="Henderson S.N."/>
            <person name="Sutton G.G."/>
            <person name="Wortman J.R."/>
            <person name="Yandell M.D."/>
            <person name="Zhang Q."/>
            <person name="Chen L.X."/>
            <person name="Brandon R.C."/>
            <person name="Rogers Y.-H.C."/>
            <person name="Blazej R.G."/>
            <person name="Champe M."/>
            <person name="Pfeiffer B.D."/>
            <person name="Wan K.H."/>
            <person name="Doyle C."/>
            <person name="Baxter E.G."/>
            <person name="Helt G."/>
            <person name="Nelson C.R."/>
            <person name="Miklos G.L.G."/>
            <person name="Abril J.F."/>
            <person name="Agbayani A."/>
            <person name="An H.-J."/>
            <person name="Andrews-Pfannkoch C."/>
            <person name="Baldwin D."/>
            <person name="Ballew R.M."/>
            <person name="Basu A."/>
            <person name="Baxendale J."/>
            <person name="Bayraktaroglu L."/>
            <person name="Beasley E.M."/>
            <person name="Beeson K.Y."/>
            <person name="Benos P.V."/>
            <person name="Berman B.P."/>
            <person name="Bhandari D."/>
            <person name="Bolshakov S."/>
            <person name="Borkova D."/>
            <person name="Botchan M.R."/>
            <person name="Bouck J."/>
            <person name="Brokstein P."/>
            <person name="Brottier P."/>
            <person name="Burtis K.C."/>
            <person name="Busam D.A."/>
            <person name="Butler H."/>
            <person name="Cadieu E."/>
            <person name="Center A."/>
            <person name="Chandra I."/>
            <person name="Cherry J.M."/>
            <person name="Cawley S."/>
            <person name="Dahlke C."/>
            <person name="Davenport L.B."/>
            <person name="Davies P."/>
            <person name="de Pablos B."/>
            <person name="Delcher A."/>
            <person name="Deng Z."/>
            <person name="Mays A.D."/>
            <person name="Dew I."/>
            <person name="Dietz S.M."/>
            <person name="Dodson K."/>
            <person name="Doup L.E."/>
            <person name="Downes M."/>
            <person name="Dugan-Rocha S."/>
            <person name="Dunkov B.C."/>
            <person name="Dunn P."/>
            <person name="Durbin K.J."/>
            <person name="Evangelista C.C."/>
            <person name="Ferraz C."/>
            <person name="Ferriera S."/>
            <person name="Fleischmann W."/>
            <person name="Fosler C."/>
            <person name="Gabrielian A.E."/>
            <person name="Garg N.S."/>
            <person name="Gelbart W.M."/>
            <person name="Glasser K."/>
            <person name="Glodek A."/>
            <person name="Gong F."/>
            <person name="Gorrell J.H."/>
            <person name="Gu Z."/>
            <person name="Guan P."/>
            <person name="Harris M."/>
            <person name="Harris N.L."/>
            <person name="Harvey D.A."/>
            <person name="Heiman T.J."/>
            <person name="Hernandez J.R."/>
            <person name="Houck J."/>
            <person name="Hostin D."/>
            <person name="Houston K.A."/>
            <person name="Howland T.J."/>
            <person name="Wei M.-H."/>
            <person name="Ibegwam C."/>
            <person name="Jalali M."/>
            <person name="Kalush F."/>
            <person name="Karpen G.H."/>
            <person name="Ke Z."/>
            <person name="Kennison J.A."/>
            <person name="Ketchum K.A."/>
            <person name="Kimmel B.E."/>
            <person name="Kodira C.D."/>
            <person name="Kraft C.L."/>
            <person name="Kravitz S."/>
            <person name="Kulp D."/>
            <person name="Lai Z."/>
            <person name="Lasko P."/>
            <person name="Lei Y."/>
            <person name="Levitsky A.A."/>
            <person name="Li J.H."/>
            <person name="Li Z."/>
            <person name="Liang Y."/>
            <person name="Lin X."/>
            <person name="Liu X."/>
            <person name="Mattei B."/>
            <person name="McIntosh T.C."/>
            <person name="McLeod M.P."/>
            <person name="McPherson D."/>
            <person name="Merkulov G."/>
            <person name="Milshina N.V."/>
            <person name="Mobarry C."/>
            <person name="Morris J."/>
            <person name="Moshrefi A."/>
            <person name="Mount S.M."/>
            <person name="Moy M."/>
            <person name="Murphy B."/>
            <person name="Murphy L."/>
            <person name="Muzny D.M."/>
            <person name="Nelson D.L."/>
            <person name="Nelson D.R."/>
            <person name="Nelson K.A."/>
            <person name="Nixon K."/>
            <person name="Nusskern D.R."/>
            <person name="Pacleb J.M."/>
            <person name="Palazzolo M."/>
            <person name="Pittman G.S."/>
            <person name="Pan S."/>
            <person name="Pollard J."/>
            <person name="Puri V."/>
            <person name="Reese M.G."/>
            <person name="Reinert K."/>
            <person name="Remington K."/>
            <person name="Saunders R.D.C."/>
            <person name="Scheeler F."/>
            <person name="Shen H."/>
            <person name="Shue B.C."/>
            <person name="Siden-Kiamos I."/>
            <person name="Simpson M."/>
            <person name="Skupski M.P."/>
            <person name="Smith T.J."/>
            <person name="Spier E."/>
            <person name="Spradling A.C."/>
            <person name="Stapleton M."/>
            <person name="Strong R."/>
            <person name="Sun E."/>
            <person name="Svirskas R."/>
            <person name="Tector C."/>
            <person name="Turner R."/>
            <person name="Venter E."/>
            <person name="Wang A.H."/>
            <person name="Wang X."/>
            <person name="Wang Z.-Y."/>
            <person name="Wassarman D.A."/>
            <person name="Weinstock G.M."/>
            <person name="Weissenbach J."/>
            <person name="Williams S.M."/>
            <person name="Woodage T."/>
            <person name="Worley K.C."/>
            <person name="Wu D."/>
            <person name="Yang S."/>
            <person name="Yao Q.A."/>
            <person name="Ye J."/>
            <person name="Yeh R.-F."/>
            <person name="Zaveri J.S."/>
            <person name="Zhan M."/>
            <person name="Zhang G."/>
            <person name="Zhao Q."/>
            <person name="Zheng L."/>
            <person name="Zheng X.H."/>
            <person name="Zhong F.N."/>
            <person name="Zhong W."/>
            <person name="Zhou X."/>
            <person name="Zhu S.C."/>
            <person name="Zhu X."/>
            <person name="Smith H.O."/>
            <person name="Gibbs R.A."/>
            <person name="Myers E.W."/>
            <person name="Rubin G.M."/>
            <person name="Venter J.C."/>
        </authorList>
    </citation>
    <scope>NUCLEOTIDE SEQUENCE [LARGE SCALE GENOMIC DNA]</scope>
    <source>
        <strain>Berkeley</strain>
    </source>
</reference>
<reference key="3">
    <citation type="journal article" date="2002" name="Genome Biol.">
        <title>Annotation of the Drosophila melanogaster euchromatic genome: a systematic review.</title>
        <authorList>
            <person name="Misra S."/>
            <person name="Crosby M.A."/>
            <person name="Mungall C.J."/>
            <person name="Matthews B.B."/>
            <person name="Campbell K.S."/>
            <person name="Hradecky P."/>
            <person name="Huang Y."/>
            <person name="Kaminker J.S."/>
            <person name="Millburn G.H."/>
            <person name="Prochnik S.E."/>
            <person name="Smith C.D."/>
            <person name="Tupy J.L."/>
            <person name="Whitfield E.J."/>
            <person name="Bayraktaroglu L."/>
            <person name="Berman B.P."/>
            <person name="Bettencourt B.R."/>
            <person name="Celniker S.E."/>
            <person name="de Grey A.D.N.J."/>
            <person name="Drysdale R.A."/>
            <person name="Harris N.L."/>
            <person name="Richter J."/>
            <person name="Russo S."/>
            <person name="Schroeder A.J."/>
            <person name="Shu S.Q."/>
            <person name="Stapleton M."/>
            <person name="Yamada C."/>
            <person name="Ashburner M."/>
            <person name="Gelbart W.M."/>
            <person name="Rubin G.M."/>
            <person name="Lewis S.E."/>
        </authorList>
    </citation>
    <scope>GENOME REANNOTATION</scope>
    <scope>ALTERNATIVE SPLICING</scope>
    <source>
        <strain>Berkeley</strain>
    </source>
</reference>
<reference key="4">
    <citation type="journal article" date="2002" name="Genome Biol.">
        <title>A Drosophila full-length cDNA resource.</title>
        <authorList>
            <person name="Stapleton M."/>
            <person name="Carlson J.W."/>
            <person name="Brokstein P."/>
            <person name="Yu C."/>
            <person name="Champe M."/>
            <person name="George R.A."/>
            <person name="Guarin H."/>
            <person name="Kronmiller B."/>
            <person name="Pacleb J.M."/>
            <person name="Park S."/>
            <person name="Wan K.H."/>
            <person name="Rubin G.M."/>
            <person name="Celniker S.E."/>
        </authorList>
    </citation>
    <scope>NUCLEOTIDE SEQUENCE [LARGE SCALE MRNA] (ISOFORM C)</scope>
    <source>
        <strain>Berkeley</strain>
        <tissue>Embryo</tissue>
    </source>
</reference>
<sequence>MMSAGGTYISTASVEVPQALQDGEKFIRWDDDSGTGTPVTMRVDAKGFFLYWVDQNNELDILDIATIRDVRTGQYAKRPKDNKLRQIVTLGPQDTLEEKTVTVCHGSDFVNMTFVNFCCTRRDIAQLWTDGLIKLAYSLAQLNGSAIMFLQKAHTKLCLQVDKSGRIPVKNIIKLFAQNKEDRKRVEKALDVTGLPSGKVDSISVSKFQFEDFYNLYKYLTQRSEVERLFDSIVGNSKRKCMSIAQLVEFLNKTQRDPRLNEILYPYANPARAKELIQQYEPNKFNAQKGQLSLDGFLRYLMGDDNPIMAPSKLDLCDDMDQPMSHYFINSSHNTYLTGHQLTGKSSVEIYRQCLLAGCRCVELDFWNGRTEEPVIVHGYTFVPEIFAKDVLEAIAESAFKTSEYPVILSFENHCNPRQQAKIANYCREIFGDMLLDKPLDSHPLEPNMDLPPPAMLRRKIIIKNKKKHHHHHHHHHHKKPAQVGTPAANNKLTTANSVDAKAAQQVGLSASHEDGGVTRSTANGDVATGTGTGSAAGTAGHAPPLQQIRQSSKDSTGSSDSDSSSEDESLPNTTPNLPSGNEPPPEKAQKETEAGAEISALVNYVQPIHFSSFENAEKKNRCYEMSSFDEKQATTLLKERPIEFVNYNKHQLSRVYPAGTRFDSSNFMPQLFWNAGCQLVALNFQTLDLAMQLNLGIFEYNARSGYLLKPEFMRRSDRRLDPFAESTVDGIIAGTVSITVLSGQFLTDKRANTFVEVDMYGLPADTVRKKFRTKTVRDNGMNPLYDEEPFVFKKVVLPELASIRIAAYEEGGKLIGHRVLPVIGLCPGYRHVNLRSEVGQPIALASLFLCVVVKDYVPDDLSNFAEALANPIKYQSELEKRDIQLSVLTDEAEALGSADEDLSKSFVFVQVGGQKKELRPVESLATSPKHRPSISAAAAMSVDVTVDRTDGGRGEDSISIVAPSIQHQHSLDQSVSTSIRQVESSQFDVDLVLAEPLEKILDHKSVKEKRLEMEKKLESLRKKHDKEKIKIAGQKSSPLEGKKPKFAITNKLVKRLSNKSLNCLSPHSEPGVEIPACPLDLGDSSEESAAADAGEDLAGGSSSLDGRTQESRLRSACREYTSQYRELQEKYHEAIYSAAEKVLKTSQTGQTKQLKASLDKVTGEVMHQLQEARRNEVKNLATVHRDRDELIRMKREVASSVVERGVAERVRLKQTFDRRTDELQKQHDSVRNALAEHRSKARQILDKEAESRSCVSSNGFLVLFHGPHHHGCTGSGSSALSGNNLTLNLDAGAAGSHSAISPAKSHNSIAAAAEMKT</sequence>